<protein>
    <recommendedName>
        <fullName evidence="1">Adenine phosphoribosyltransferase</fullName>
        <shortName evidence="1">APRT</shortName>
        <ecNumber evidence="1">2.4.2.7</ecNumber>
    </recommendedName>
</protein>
<organism>
    <name type="scientific">Ruminiclostridium cellulolyticum (strain ATCC 35319 / DSM 5812 / JCM 6584 / H10)</name>
    <name type="common">Clostridium cellulolyticum</name>
    <dbReference type="NCBI Taxonomy" id="394503"/>
    <lineage>
        <taxon>Bacteria</taxon>
        <taxon>Bacillati</taxon>
        <taxon>Bacillota</taxon>
        <taxon>Clostridia</taxon>
        <taxon>Eubacteriales</taxon>
        <taxon>Oscillospiraceae</taxon>
        <taxon>Ruminiclostridium</taxon>
    </lineage>
</organism>
<proteinExistence type="inferred from homology"/>
<feature type="chain" id="PRO_1000116235" description="Adenine phosphoribosyltransferase">
    <location>
        <begin position="1"/>
        <end position="171"/>
    </location>
</feature>
<accession>B8I3F7</accession>
<evidence type="ECO:0000255" key="1">
    <source>
        <dbReference type="HAMAP-Rule" id="MF_00004"/>
    </source>
</evidence>
<reference key="1">
    <citation type="submission" date="2009-01" db="EMBL/GenBank/DDBJ databases">
        <title>Complete sequence of Clostridium cellulolyticum H10.</title>
        <authorList>
            <consortium name="US DOE Joint Genome Institute"/>
            <person name="Lucas S."/>
            <person name="Copeland A."/>
            <person name="Lapidus A."/>
            <person name="Glavina del Rio T."/>
            <person name="Dalin E."/>
            <person name="Tice H."/>
            <person name="Bruce D."/>
            <person name="Goodwin L."/>
            <person name="Pitluck S."/>
            <person name="Chertkov O."/>
            <person name="Saunders E."/>
            <person name="Brettin T."/>
            <person name="Detter J.C."/>
            <person name="Han C."/>
            <person name="Larimer F."/>
            <person name="Land M."/>
            <person name="Hauser L."/>
            <person name="Kyrpides N."/>
            <person name="Ivanova N."/>
            <person name="Zhou J."/>
            <person name="Richardson P."/>
        </authorList>
    </citation>
    <scope>NUCLEOTIDE SEQUENCE [LARGE SCALE GENOMIC DNA]</scope>
    <source>
        <strain>ATCC 35319 / DSM 5812 / JCM 6584 / H10</strain>
    </source>
</reference>
<comment type="function">
    <text evidence="1">Catalyzes a salvage reaction resulting in the formation of AMP, that is energically less costly than de novo synthesis.</text>
</comment>
<comment type="catalytic activity">
    <reaction evidence="1">
        <text>AMP + diphosphate = 5-phospho-alpha-D-ribose 1-diphosphate + adenine</text>
        <dbReference type="Rhea" id="RHEA:16609"/>
        <dbReference type="ChEBI" id="CHEBI:16708"/>
        <dbReference type="ChEBI" id="CHEBI:33019"/>
        <dbReference type="ChEBI" id="CHEBI:58017"/>
        <dbReference type="ChEBI" id="CHEBI:456215"/>
        <dbReference type="EC" id="2.4.2.7"/>
    </reaction>
</comment>
<comment type="pathway">
    <text evidence="1">Purine metabolism; AMP biosynthesis via salvage pathway; AMP from adenine: step 1/1.</text>
</comment>
<comment type="subunit">
    <text evidence="1">Homodimer.</text>
</comment>
<comment type="subcellular location">
    <subcellularLocation>
        <location evidence="1">Cytoplasm</location>
    </subcellularLocation>
</comment>
<comment type="similarity">
    <text evidence="1">Belongs to the purine/pyrimidine phosphoribosyltransferase family.</text>
</comment>
<gene>
    <name evidence="1" type="primary">apt</name>
    <name type="ordered locus">Ccel_1952</name>
</gene>
<dbReference type="EC" id="2.4.2.7" evidence="1"/>
<dbReference type="EMBL" id="CP001348">
    <property type="protein sequence ID" value="ACL76300.1"/>
    <property type="molecule type" value="Genomic_DNA"/>
</dbReference>
<dbReference type="RefSeq" id="WP_015925404.1">
    <property type="nucleotide sequence ID" value="NC_011898.1"/>
</dbReference>
<dbReference type="SMR" id="B8I3F7"/>
<dbReference type="STRING" id="394503.Ccel_1952"/>
<dbReference type="KEGG" id="cce:Ccel_1952"/>
<dbReference type="eggNOG" id="COG0503">
    <property type="taxonomic scope" value="Bacteria"/>
</dbReference>
<dbReference type="HOGENOM" id="CLU_063339_3_0_9"/>
<dbReference type="OrthoDB" id="9803963at2"/>
<dbReference type="UniPathway" id="UPA00588">
    <property type="reaction ID" value="UER00646"/>
</dbReference>
<dbReference type="Proteomes" id="UP000001349">
    <property type="component" value="Chromosome"/>
</dbReference>
<dbReference type="GO" id="GO:0005737">
    <property type="term" value="C:cytoplasm"/>
    <property type="evidence" value="ECO:0007669"/>
    <property type="project" value="UniProtKB-SubCell"/>
</dbReference>
<dbReference type="GO" id="GO:0002055">
    <property type="term" value="F:adenine binding"/>
    <property type="evidence" value="ECO:0007669"/>
    <property type="project" value="TreeGrafter"/>
</dbReference>
<dbReference type="GO" id="GO:0003999">
    <property type="term" value="F:adenine phosphoribosyltransferase activity"/>
    <property type="evidence" value="ECO:0007669"/>
    <property type="project" value="UniProtKB-UniRule"/>
</dbReference>
<dbReference type="GO" id="GO:0016208">
    <property type="term" value="F:AMP binding"/>
    <property type="evidence" value="ECO:0007669"/>
    <property type="project" value="TreeGrafter"/>
</dbReference>
<dbReference type="GO" id="GO:0006168">
    <property type="term" value="P:adenine salvage"/>
    <property type="evidence" value="ECO:0007669"/>
    <property type="project" value="InterPro"/>
</dbReference>
<dbReference type="GO" id="GO:0044209">
    <property type="term" value="P:AMP salvage"/>
    <property type="evidence" value="ECO:0007669"/>
    <property type="project" value="UniProtKB-UniRule"/>
</dbReference>
<dbReference type="GO" id="GO:0006166">
    <property type="term" value="P:purine ribonucleoside salvage"/>
    <property type="evidence" value="ECO:0007669"/>
    <property type="project" value="UniProtKB-KW"/>
</dbReference>
<dbReference type="CDD" id="cd06223">
    <property type="entry name" value="PRTases_typeI"/>
    <property type="match status" value="1"/>
</dbReference>
<dbReference type="FunFam" id="3.40.50.2020:FF:000004">
    <property type="entry name" value="Adenine phosphoribosyltransferase"/>
    <property type="match status" value="1"/>
</dbReference>
<dbReference type="Gene3D" id="3.40.50.2020">
    <property type="match status" value="1"/>
</dbReference>
<dbReference type="HAMAP" id="MF_00004">
    <property type="entry name" value="Aden_phosphoribosyltr"/>
    <property type="match status" value="1"/>
</dbReference>
<dbReference type="InterPro" id="IPR005764">
    <property type="entry name" value="Ade_phspho_trans"/>
</dbReference>
<dbReference type="InterPro" id="IPR000836">
    <property type="entry name" value="PRibTrfase_dom"/>
</dbReference>
<dbReference type="InterPro" id="IPR029057">
    <property type="entry name" value="PRTase-like"/>
</dbReference>
<dbReference type="InterPro" id="IPR050054">
    <property type="entry name" value="UPRTase/APRTase"/>
</dbReference>
<dbReference type="NCBIfam" id="TIGR01090">
    <property type="entry name" value="apt"/>
    <property type="match status" value="1"/>
</dbReference>
<dbReference type="NCBIfam" id="NF002633">
    <property type="entry name" value="PRK02304.1-2"/>
    <property type="match status" value="1"/>
</dbReference>
<dbReference type="NCBIfam" id="NF002634">
    <property type="entry name" value="PRK02304.1-3"/>
    <property type="match status" value="1"/>
</dbReference>
<dbReference type="NCBIfam" id="NF002636">
    <property type="entry name" value="PRK02304.1-5"/>
    <property type="match status" value="1"/>
</dbReference>
<dbReference type="PANTHER" id="PTHR32315">
    <property type="entry name" value="ADENINE PHOSPHORIBOSYLTRANSFERASE"/>
    <property type="match status" value="1"/>
</dbReference>
<dbReference type="PANTHER" id="PTHR32315:SF3">
    <property type="entry name" value="ADENINE PHOSPHORIBOSYLTRANSFERASE"/>
    <property type="match status" value="1"/>
</dbReference>
<dbReference type="Pfam" id="PF00156">
    <property type="entry name" value="Pribosyltran"/>
    <property type="match status" value="1"/>
</dbReference>
<dbReference type="SUPFAM" id="SSF53271">
    <property type="entry name" value="PRTase-like"/>
    <property type="match status" value="1"/>
</dbReference>
<dbReference type="PROSITE" id="PS00103">
    <property type="entry name" value="PUR_PYR_PR_TRANSFER"/>
    <property type="match status" value="1"/>
</dbReference>
<keyword id="KW-0963">Cytoplasm</keyword>
<keyword id="KW-0328">Glycosyltransferase</keyword>
<keyword id="KW-0660">Purine salvage</keyword>
<keyword id="KW-1185">Reference proteome</keyword>
<keyword id="KW-0808">Transferase</keyword>
<sequence length="171" mass="19277">MDLKDKLRHVMDFPKEGIDFIDITTVLQDPEAFRECMESFKTLAEKMGDFDLIVGSESRGFIFGAPLAYRMEKGFVPVRKKGKLPYKTVREEYDLEYGKDELEIHSDAIAPGEKVLIVDDLLATGGTTEANIKLVEKLGGEVTGIVYFIELMSLKGRDKLKGYNVDSIVKF</sequence>
<name>APT_RUMCH</name>